<comment type="function">
    <text evidence="1">Required for rescue of stalled ribosomes mediated by trans-translation. Binds to transfer-messenger RNA (tmRNA), required for stable association of tmRNA with ribosomes. tmRNA and SmpB together mimic tRNA shape, replacing the anticodon stem-loop with SmpB. tmRNA is encoded by the ssrA gene; the 2 termini fold to resemble tRNA(Ala) and it encodes a 'tag peptide', a short internal open reading frame. During trans-translation Ala-aminoacylated tmRNA acts like a tRNA, entering the A-site of stalled ribosomes, displacing the stalled mRNA. The ribosome then switches to translate the ORF on the tmRNA; the nascent peptide is terminated with the 'tag peptide' encoded by the tmRNA and targeted for degradation. The ribosome is freed to recommence translation, which seems to be the essential function of trans-translation.</text>
</comment>
<comment type="subcellular location">
    <subcellularLocation>
        <location evidence="1">Cytoplasm</location>
    </subcellularLocation>
    <text evidence="1">The tmRNA-SmpB complex associates with stalled 70S ribosomes.</text>
</comment>
<comment type="similarity">
    <text evidence="1">Belongs to the SmpB family.</text>
</comment>
<keyword id="KW-0963">Cytoplasm</keyword>
<keyword id="KW-0694">RNA-binding</keyword>
<name>SSRP_SPHEL</name>
<protein>
    <recommendedName>
        <fullName evidence="1">SsrA-binding protein</fullName>
    </recommendedName>
    <alternativeName>
        <fullName evidence="1">Small protein B</fullName>
    </alternativeName>
</protein>
<accession>Q7X2N6</accession>
<organism>
    <name type="scientific">Sphingomonas elodea</name>
    <dbReference type="NCBI Taxonomy" id="179878"/>
    <lineage>
        <taxon>Bacteria</taxon>
        <taxon>Pseudomonadati</taxon>
        <taxon>Pseudomonadota</taxon>
        <taxon>Alphaproteobacteria</taxon>
        <taxon>Sphingomonadales</taxon>
        <taxon>Sphingomonadaceae</taxon>
        <taxon>Sphingomonas</taxon>
    </lineage>
</organism>
<proteinExistence type="inferred from homology"/>
<dbReference type="EMBL" id="AY220100">
    <property type="protein sequence ID" value="AAP46182.1"/>
    <property type="molecule type" value="Genomic_DNA"/>
</dbReference>
<dbReference type="STRING" id="1081640.GCA_000226955_00843"/>
<dbReference type="GO" id="GO:0005829">
    <property type="term" value="C:cytosol"/>
    <property type="evidence" value="ECO:0007669"/>
    <property type="project" value="TreeGrafter"/>
</dbReference>
<dbReference type="GO" id="GO:0003723">
    <property type="term" value="F:RNA binding"/>
    <property type="evidence" value="ECO:0007669"/>
    <property type="project" value="UniProtKB-UniRule"/>
</dbReference>
<dbReference type="GO" id="GO:0070929">
    <property type="term" value="P:trans-translation"/>
    <property type="evidence" value="ECO:0007669"/>
    <property type="project" value="UniProtKB-UniRule"/>
</dbReference>
<dbReference type="CDD" id="cd09294">
    <property type="entry name" value="SmpB"/>
    <property type="match status" value="1"/>
</dbReference>
<dbReference type="Gene3D" id="2.40.280.10">
    <property type="match status" value="1"/>
</dbReference>
<dbReference type="HAMAP" id="MF_00023">
    <property type="entry name" value="SmpB"/>
    <property type="match status" value="1"/>
</dbReference>
<dbReference type="InterPro" id="IPR023620">
    <property type="entry name" value="SmpB"/>
</dbReference>
<dbReference type="InterPro" id="IPR000037">
    <property type="entry name" value="SsrA-bd_prot"/>
</dbReference>
<dbReference type="InterPro" id="IPR020081">
    <property type="entry name" value="SsrA-bd_prot_CS"/>
</dbReference>
<dbReference type="NCBIfam" id="NF003843">
    <property type="entry name" value="PRK05422.1"/>
    <property type="match status" value="1"/>
</dbReference>
<dbReference type="NCBIfam" id="TIGR00086">
    <property type="entry name" value="smpB"/>
    <property type="match status" value="1"/>
</dbReference>
<dbReference type="PANTHER" id="PTHR30308:SF2">
    <property type="entry name" value="SSRA-BINDING PROTEIN"/>
    <property type="match status" value="1"/>
</dbReference>
<dbReference type="PANTHER" id="PTHR30308">
    <property type="entry name" value="TMRNA-BINDING COMPONENT OF TRANS-TRANSLATION TAGGING COMPLEX"/>
    <property type="match status" value="1"/>
</dbReference>
<dbReference type="Pfam" id="PF01668">
    <property type="entry name" value="SmpB"/>
    <property type="match status" value="1"/>
</dbReference>
<dbReference type="SUPFAM" id="SSF74982">
    <property type="entry name" value="Small protein B (SmpB)"/>
    <property type="match status" value="1"/>
</dbReference>
<dbReference type="PROSITE" id="PS01317">
    <property type="entry name" value="SSRP"/>
    <property type="match status" value="1"/>
</dbReference>
<evidence type="ECO:0000255" key="1">
    <source>
        <dbReference type="HAMAP-Rule" id="MF_00023"/>
    </source>
</evidence>
<evidence type="ECO:0000256" key="2">
    <source>
        <dbReference type="SAM" id="MobiDB-lite"/>
    </source>
</evidence>
<sequence length="160" mass="18471">MARPRPATFDKVKTVAENRRARFDYFIEQTYEAGLVLTGTEVKSLRFGEGSIAEAYAEVKDEXVWLVNANIPEFSHGNRFNHEAKRPRKLLLHEREINKLHGAVAREGMTLVPLSVYFNGKGRAKVELALAKGKKTHDKRETIKERDWKREQSRILRDRG</sequence>
<reference key="1">
    <citation type="submission" date="2003-01" db="EMBL/GenBank/DDBJ databases">
        <title>Genes required for gellan polysaccharide biosynthesis in Sphingomonas elodea ATCC31461.</title>
        <authorList>
            <person name="Harding N.E."/>
            <person name="Patel Y.N."/>
            <person name="Coleman R.J."/>
        </authorList>
    </citation>
    <scope>NUCLEOTIDE SEQUENCE [GENOMIC DNA]</scope>
    <source>
        <strain>ATCC 31461 / PS-60</strain>
    </source>
</reference>
<gene>
    <name evidence="1" type="primary">smpB</name>
</gene>
<feature type="chain" id="PRO_0000103027" description="SsrA-binding protein">
    <location>
        <begin position="1"/>
        <end position="160"/>
    </location>
</feature>
<feature type="region of interest" description="Disordered" evidence="2">
    <location>
        <begin position="135"/>
        <end position="160"/>
    </location>
</feature>
<feature type="compositionally biased region" description="Basic and acidic residues" evidence="2">
    <location>
        <begin position="138"/>
        <end position="160"/>
    </location>
</feature>